<name>OR9H1_HUMAN</name>
<organism>
    <name type="scientific">Homo sapiens</name>
    <name type="common">Human</name>
    <dbReference type="NCBI Taxonomy" id="9606"/>
    <lineage>
        <taxon>Eukaryota</taxon>
        <taxon>Metazoa</taxon>
        <taxon>Chordata</taxon>
        <taxon>Craniata</taxon>
        <taxon>Vertebrata</taxon>
        <taxon>Euteleostomi</taxon>
        <taxon>Mammalia</taxon>
        <taxon>Eutheria</taxon>
        <taxon>Euarchontoglires</taxon>
        <taxon>Primates</taxon>
        <taxon>Haplorrhini</taxon>
        <taxon>Catarrhini</taxon>
        <taxon>Hominidae</taxon>
        <taxon>Homo</taxon>
    </lineage>
</organism>
<protein>
    <recommendedName>
        <fullName>Olfactory receptor OR9H1</fullName>
    </recommendedName>
    <alternativeName>
        <fullName>Olfactory receptor family 9 subfamily H member 1</fullName>
    </alternativeName>
</protein>
<accession>Q6UXT6</accession>
<reference key="1">
    <citation type="journal article" date="2003" name="Genome Res.">
        <title>The secreted protein discovery initiative (SPDI), a large-scale effort to identify novel human secreted and transmembrane proteins: a bioinformatics assessment.</title>
        <authorList>
            <person name="Clark H.F."/>
            <person name="Gurney A.L."/>
            <person name="Abaya E."/>
            <person name="Baker K."/>
            <person name="Baldwin D.T."/>
            <person name="Brush J."/>
            <person name="Chen J."/>
            <person name="Chow B."/>
            <person name="Chui C."/>
            <person name="Crowley C."/>
            <person name="Currell B."/>
            <person name="Deuel B."/>
            <person name="Dowd P."/>
            <person name="Eaton D."/>
            <person name="Foster J.S."/>
            <person name="Grimaldi C."/>
            <person name="Gu Q."/>
            <person name="Hass P.E."/>
            <person name="Heldens S."/>
            <person name="Huang A."/>
            <person name="Kim H.S."/>
            <person name="Klimowski L."/>
            <person name="Jin Y."/>
            <person name="Johnson S."/>
            <person name="Lee J."/>
            <person name="Lewis L."/>
            <person name="Liao D."/>
            <person name="Mark M.R."/>
            <person name="Robbie E."/>
            <person name="Sanchez C."/>
            <person name="Schoenfeld J."/>
            <person name="Seshagiri S."/>
            <person name="Simmons L."/>
            <person name="Singh J."/>
            <person name="Smith V."/>
            <person name="Stinson J."/>
            <person name="Vagts A."/>
            <person name="Vandlen R.L."/>
            <person name="Watanabe C."/>
            <person name="Wieand D."/>
            <person name="Woods K."/>
            <person name="Xie M.-H."/>
            <person name="Yansura D.G."/>
            <person name="Yi S."/>
            <person name="Yu G."/>
            <person name="Yuan J."/>
            <person name="Zhang M."/>
            <person name="Zhang Z."/>
            <person name="Goddard A.D."/>
            <person name="Wood W.I."/>
            <person name="Godowski P.J."/>
            <person name="Gray A.M."/>
        </authorList>
    </citation>
    <scope>NUCLEOTIDE SEQUENCE [LARGE SCALE MRNA]</scope>
</reference>
<reference key="2">
    <citation type="journal article" date="2006" name="Nature">
        <title>The DNA sequence and biological annotation of human chromosome 1.</title>
        <authorList>
            <person name="Gregory S.G."/>
            <person name="Barlow K.F."/>
            <person name="McLay K.E."/>
            <person name="Kaul R."/>
            <person name="Swarbreck D."/>
            <person name="Dunham A."/>
            <person name="Scott C.E."/>
            <person name="Howe K.L."/>
            <person name="Woodfine K."/>
            <person name="Spencer C.C.A."/>
            <person name="Jones M.C."/>
            <person name="Gillson C."/>
            <person name="Searle S."/>
            <person name="Zhou Y."/>
            <person name="Kokocinski F."/>
            <person name="McDonald L."/>
            <person name="Evans R."/>
            <person name="Phillips K."/>
            <person name="Atkinson A."/>
            <person name="Cooper R."/>
            <person name="Jones C."/>
            <person name="Hall R.E."/>
            <person name="Andrews T.D."/>
            <person name="Lloyd C."/>
            <person name="Ainscough R."/>
            <person name="Almeida J.P."/>
            <person name="Ambrose K.D."/>
            <person name="Anderson F."/>
            <person name="Andrew R.W."/>
            <person name="Ashwell R.I.S."/>
            <person name="Aubin K."/>
            <person name="Babbage A.K."/>
            <person name="Bagguley C.L."/>
            <person name="Bailey J."/>
            <person name="Beasley H."/>
            <person name="Bethel G."/>
            <person name="Bird C.P."/>
            <person name="Bray-Allen S."/>
            <person name="Brown J.Y."/>
            <person name="Brown A.J."/>
            <person name="Buckley D."/>
            <person name="Burton J."/>
            <person name="Bye J."/>
            <person name="Carder C."/>
            <person name="Chapman J.C."/>
            <person name="Clark S.Y."/>
            <person name="Clarke G."/>
            <person name="Clee C."/>
            <person name="Cobley V."/>
            <person name="Collier R.E."/>
            <person name="Corby N."/>
            <person name="Coville G.J."/>
            <person name="Davies J."/>
            <person name="Deadman R."/>
            <person name="Dunn M."/>
            <person name="Earthrowl M."/>
            <person name="Ellington A.G."/>
            <person name="Errington H."/>
            <person name="Frankish A."/>
            <person name="Frankland J."/>
            <person name="French L."/>
            <person name="Garner P."/>
            <person name="Garnett J."/>
            <person name="Gay L."/>
            <person name="Ghori M.R.J."/>
            <person name="Gibson R."/>
            <person name="Gilby L.M."/>
            <person name="Gillett W."/>
            <person name="Glithero R.J."/>
            <person name="Grafham D.V."/>
            <person name="Griffiths C."/>
            <person name="Griffiths-Jones S."/>
            <person name="Grocock R."/>
            <person name="Hammond S."/>
            <person name="Harrison E.S.I."/>
            <person name="Hart E."/>
            <person name="Haugen E."/>
            <person name="Heath P.D."/>
            <person name="Holmes S."/>
            <person name="Holt K."/>
            <person name="Howden P.J."/>
            <person name="Hunt A.R."/>
            <person name="Hunt S.E."/>
            <person name="Hunter G."/>
            <person name="Isherwood J."/>
            <person name="James R."/>
            <person name="Johnson C."/>
            <person name="Johnson D."/>
            <person name="Joy A."/>
            <person name="Kay M."/>
            <person name="Kershaw J.K."/>
            <person name="Kibukawa M."/>
            <person name="Kimberley A.M."/>
            <person name="King A."/>
            <person name="Knights A.J."/>
            <person name="Lad H."/>
            <person name="Laird G."/>
            <person name="Lawlor S."/>
            <person name="Leongamornlert D.A."/>
            <person name="Lloyd D.M."/>
            <person name="Loveland J."/>
            <person name="Lovell J."/>
            <person name="Lush M.J."/>
            <person name="Lyne R."/>
            <person name="Martin S."/>
            <person name="Mashreghi-Mohammadi M."/>
            <person name="Matthews L."/>
            <person name="Matthews N.S.W."/>
            <person name="McLaren S."/>
            <person name="Milne S."/>
            <person name="Mistry S."/>
            <person name="Moore M.J.F."/>
            <person name="Nickerson T."/>
            <person name="O'Dell C.N."/>
            <person name="Oliver K."/>
            <person name="Palmeiri A."/>
            <person name="Palmer S.A."/>
            <person name="Parker A."/>
            <person name="Patel D."/>
            <person name="Pearce A.V."/>
            <person name="Peck A.I."/>
            <person name="Pelan S."/>
            <person name="Phelps K."/>
            <person name="Phillimore B.J."/>
            <person name="Plumb R."/>
            <person name="Rajan J."/>
            <person name="Raymond C."/>
            <person name="Rouse G."/>
            <person name="Saenphimmachak C."/>
            <person name="Sehra H.K."/>
            <person name="Sheridan E."/>
            <person name="Shownkeen R."/>
            <person name="Sims S."/>
            <person name="Skuce C.D."/>
            <person name="Smith M."/>
            <person name="Steward C."/>
            <person name="Subramanian S."/>
            <person name="Sycamore N."/>
            <person name="Tracey A."/>
            <person name="Tromans A."/>
            <person name="Van Helmond Z."/>
            <person name="Wall M."/>
            <person name="Wallis J.M."/>
            <person name="White S."/>
            <person name="Whitehead S.L."/>
            <person name="Wilkinson J.E."/>
            <person name="Willey D.L."/>
            <person name="Williams H."/>
            <person name="Wilming L."/>
            <person name="Wray P.W."/>
            <person name="Wu Z."/>
            <person name="Coulson A."/>
            <person name="Vaudin M."/>
            <person name="Sulston J.E."/>
            <person name="Durbin R.M."/>
            <person name="Hubbard T."/>
            <person name="Wooster R."/>
            <person name="Dunham I."/>
            <person name="Carter N.P."/>
            <person name="McVean G."/>
            <person name="Ross M.T."/>
            <person name="Harrow J."/>
            <person name="Olson M.V."/>
            <person name="Beck S."/>
            <person name="Rogers J."/>
            <person name="Bentley D.R."/>
        </authorList>
    </citation>
    <scope>NUCLEOTIDE SEQUENCE [LARGE SCALE GENOMIC DNA]</scope>
    <scope>VARIANTS ARG-232 AND 233-GLN--LEU-308 DEL</scope>
</reference>
<proteinExistence type="evidence at transcript level"/>
<keyword id="KW-1003">Cell membrane</keyword>
<keyword id="KW-1015">Disulfide bond</keyword>
<keyword id="KW-0297">G-protein coupled receptor</keyword>
<keyword id="KW-0472">Membrane</keyword>
<keyword id="KW-0552">Olfaction</keyword>
<keyword id="KW-0675">Receptor</keyword>
<keyword id="KW-1185">Reference proteome</keyword>
<keyword id="KW-0716">Sensory transduction</keyword>
<keyword id="KW-0807">Transducer</keyword>
<keyword id="KW-0812">Transmembrane</keyword>
<keyword id="KW-1133">Transmembrane helix</keyword>
<gene>
    <name evidence="6" type="primary">OR9H1</name>
    <name evidence="6" type="synonym">OR9H1P</name>
    <name type="ORF">UNQ9373</name>
</gene>
<dbReference type="EMBL" id="AY358215">
    <property type="protein sequence ID" value="AAQ88582.1"/>
    <property type="molecule type" value="mRNA"/>
</dbReference>
<dbReference type="EMBL" id="AL450999">
    <property type="status" value="NOT_ANNOTATED_CDS"/>
    <property type="molecule type" value="Genomic_DNA"/>
</dbReference>
<dbReference type="HGNC" id="HGNC:15038">
    <property type="gene designation" value="OR9H1"/>
</dbReference>
<dbReference type="Proteomes" id="UP000005640">
    <property type="component" value="Unplaced"/>
</dbReference>
<dbReference type="GO" id="GO:0005886">
    <property type="term" value="C:plasma membrane"/>
    <property type="evidence" value="ECO:0007669"/>
    <property type="project" value="UniProtKB-SubCell"/>
</dbReference>
<dbReference type="GO" id="GO:0004930">
    <property type="term" value="F:G protein-coupled receptor activity"/>
    <property type="evidence" value="ECO:0007669"/>
    <property type="project" value="UniProtKB-KW"/>
</dbReference>
<dbReference type="GO" id="GO:0004984">
    <property type="term" value="F:olfactory receptor activity"/>
    <property type="evidence" value="ECO:0007669"/>
    <property type="project" value="InterPro"/>
</dbReference>
<dbReference type="CDD" id="cd15419">
    <property type="entry name" value="7tmA_OR9K2-like"/>
    <property type="match status" value="1"/>
</dbReference>
<dbReference type="FunFam" id="1.20.1070.10:FF:000003">
    <property type="entry name" value="Olfactory receptor"/>
    <property type="match status" value="1"/>
</dbReference>
<dbReference type="Gene3D" id="1.20.1070.10">
    <property type="entry name" value="Rhodopsin 7-helix transmembrane proteins"/>
    <property type="match status" value="1"/>
</dbReference>
<dbReference type="InterPro" id="IPR000276">
    <property type="entry name" value="GPCR_Rhodpsn"/>
</dbReference>
<dbReference type="InterPro" id="IPR017452">
    <property type="entry name" value="GPCR_Rhodpsn_7TM"/>
</dbReference>
<dbReference type="InterPro" id="IPR000725">
    <property type="entry name" value="Olfact_rcpt"/>
</dbReference>
<dbReference type="PANTHER" id="PTHR48018">
    <property type="entry name" value="OLFACTORY RECEPTOR"/>
    <property type="match status" value="1"/>
</dbReference>
<dbReference type="Pfam" id="PF13853">
    <property type="entry name" value="7tm_4"/>
    <property type="match status" value="1"/>
</dbReference>
<dbReference type="PRINTS" id="PR00237">
    <property type="entry name" value="GPCRRHODOPSN"/>
</dbReference>
<dbReference type="PRINTS" id="PR00245">
    <property type="entry name" value="OLFACTORYR"/>
</dbReference>
<dbReference type="SUPFAM" id="SSF81321">
    <property type="entry name" value="Family A G protein-coupled receptor-like"/>
    <property type="match status" value="1"/>
</dbReference>
<dbReference type="PROSITE" id="PS00237">
    <property type="entry name" value="G_PROTEIN_RECEP_F1_1"/>
    <property type="match status" value="1"/>
</dbReference>
<dbReference type="PROSITE" id="PS50262">
    <property type="entry name" value="G_PROTEIN_RECEP_F1_2"/>
    <property type="match status" value="1"/>
</dbReference>
<feature type="chain" id="PRO_0000461867" description="Olfactory receptor OR9H1">
    <location>
        <begin position="1"/>
        <end position="308"/>
    </location>
</feature>
<feature type="topological domain" description="Extracellular" evidence="5">
    <location>
        <begin position="1"/>
        <end position="26"/>
    </location>
</feature>
<feature type="transmembrane region" description="Helical; Name=1" evidence="1">
    <location>
        <begin position="27"/>
        <end position="47"/>
    </location>
</feature>
<feature type="topological domain" description="Cytoplasmic" evidence="5">
    <location>
        <begin position="48"/>
        <end position="58"/>
    </location>
</feature>
<feature type="transmembrane region" description="Helical; Name=2" evidence="1">
    <location>
        <begin position="59"/>
        <end position="81"/>
    </location>
</feature>
<feature type="topological domain" description="Extracellular" evidence="5">
    <location>
        <begin position="82"/>
        <end position="95"/>
    </location>
</feature>
<feature type="transmembrane region" description="Helical; Name=3" evidence="1">
    <location>
        <begin position="96"/>
        <end position="116"/>
    </location>
</feature>
<feature type="topological domain" description="Cytoplasmic" evidence="5">
    <location>
        <begin position="117"/>
        <end position="137"/>
    </location>
</feature>
<feature type="transmembrane region" description="Helical; Name=4" evidence="1">
    <location>
        <begin position="138"/>
        <end position="158"/>
    </location>
</feature>
<feature type="topological domain" description="Extracellular" evidence="5">
    <location>
        <begin position="159"/>
        <end position="203"/>
    </location>
</feature>
<feature type="transmembrane region" description="Helical; Name=5" evidence="1">
    <location>
        <begin position="204"/>
        <end position="224"/>
    </location>
</feature>
<feature type="topological domain" description="Cytoplasmic" evidence="5">
    <location>
        <begin position="225"/>
        <end position="245"/>
    </location>
</feature>
<feature type="transmembrane region" description="Helical; Name=6" evidence="1">
    <location>
        <begin position="246"/>
        <end position="266"/>
    </location>
</feature>
<feature type="topological domain" description="Extracellular" evidence="5">
    <location>
        <begin position="267"/>
        <end position="269"/>
    </location>
</feature>
<feature type="transmembrane region" description="Helical; Name=7" evidence="1">
    <location>
        <begin position="270"/>
        <end position="290"/>
    </location>
</feature>
<feature type="topological domain" description="Cytoplasmic" evidence="5">
    <location>
        <begin position="291"/>
        <end position="308"/>
    </location>
</feature>
<feature type="disulfide bond" evidence="2">
    <location>
        <begin position="95"/>
        <end position="177"/>
    </location>
</feature>
<feature type="sequence variant" id="VAR_090057" description="In dbSNP:rs7555046." evidence="4">
    <original>C</original>
    <variation>R</variation>
    <location>
        <position position="232"/>
    </location>
</feature>
<feature type="sequence variant" id="VAR_090058" description="In dbSNP:rs6587482." evidence="4">
    <location>
        <begin position="233"/>
        <end position="308"/>
    </location>
</feature>
<evidence type="ECO:0000255" key="1"/>
<evidence type="ECO:0000255" key="2">
    <source>
        <dbReference type="PROSITE-ProRule" id="PRU00521"/>
    </source>
</evidence>
<evidence type="ECO:0000269" key="3">
    <source>
    </source>
</evidence>
<evidence type="ECO:0000269" key="4">
    <source>
    </source>
</evidence>
<evidence type="ECO:0000305" key="5"/>
<evidence type="ECO:0000312" key="6">
    <source>
        <dbReference type="HGNC" id="HGNC:15038"/>
    </source>
</evidence>
<comment type="function">
    <text evidence="5">Odorant receptor.</text>
</comment>
<comment type="subcellular location">
    <subcellularLocation>
        <location evidence="5">Cell membrane</location>
        <topology evidence="1">Multi-pass membrane protein</topology>
    </subcellularLocation>
</comment>
<comment type="polymorphism">
    <text evidence="3 4">The sequence shown in this entry differs from the translation of the reference genome assembly (GRCh38/hg38) due to a missense variant p.Cys232Arg and a nonsense variant creating stop codon at position 233 in the reference genome, leading to the synthesis of a truncated protein (PubMed:16710414). This gene is a pseudogene on the reference genome but has been found to be protein coding in some individuals (PubMed:12975309).</text>
</comment>
<comment type="similarity">
    <text evidence="2">Belongs to the G-protein coupled receptor 1 family.</text>
</comment>
<comment type="caution">
    <text evidence="5">The sequence shown in this entry differs from the translation of the reference genome assembly (GRCh38/hg38) due to a missense variant p.Cys232Arg and to a nonsense variant creating a stop codon at position 233 in the reference genome.</text>
</comment>
<sequence>MVNFTHVSEFVLLGFQGGPGMQAMLFLIFLILYGIAVVGNLGMIVIIWVDAHLHTPMYAFLQSLSLLDICYSSTIAPRALANSMQEDHTISFGGCAAQFFFLSLFGITEAFLLAAMAYDRFIAICNPLLYSVSMSHQVCVLLISGSYLWGVVNAIAQTTMTFRLPFCGSNEINDFFCDVPPLLSLSCSDTFINQLVLLGLCGSIIVSTFLIVLVSYIYIISTILRIPTMQGCQKAFSTCASHLTGVCLFFGTVFFMYAQPSAIFFMEQSKIVSIFYTMVIPMLNPLIYSLRNKEVKQALRRSMQKLSL</sequence>